<evidence type="ECO:0000255" key="1">
    <source>
        <dbReference type="HAMAP-Rule" id="MF_01243"/>
    </source>
</evidence>
<evidence type="ECO:0000255" key="2">
    <source>
        <dbReference type="PROSITE-ProRule" id="PRU00054"/>
    </source>
</evidence>
<proteinExistence type="inferred from homology"/>
<dbReference type="EC" id="3.5.1.49" evidence="1"/>
<dbReference type="EMBL" id="CP000485">
    <property type="protein sequence ID" value="ABK86801.1"/>
    <property type="molecule type" value="Genomic_DNA"/>
</dbReference>
<dbReference type="RefSeq" id="WP_000535812.1">
    <property type="nucleotide sequence ID" value="NC_008600.1"/>
</dbReference>
<dbReference type="SMR" id="A0RHV8"/>
<dbReference type="KEGG" id="btl:BALH_3568"/>
<dbReference type="HOGENOM" id="CLU_071797_0_0_9"/>
<dbReference type="GO" id="GO:0004328">
    <property type="term" value="F:formamidase activity"/>
    <property type="evidence" value="ECO:0007669"/>
    <property type="project" value="UniProtKB-UniRule"/>
</dbReference>
<dbReference type="GO" id="GO:0050126">
    <property type="term" value="F:N-carbamoylputrescine amidase activity"/>
    <property type="evidence" value="ECO:0007669"/>
    <property type="project" value="TreeGrafter"/>
</dbReference>
<dbReference type="GO" id="GO:0033388">
    <property type="term" value="P:putrescine biosynthetic process from arginine"/>
    <property type="evidence" value="ECO:0007669"/>
    <property type="project" value="TreeGrafter"/>
</dbReference>
<dbReference type="CDD" id="cd07565">
    <property type="entry name" value="aliphatic_amidase"/>
    <property type="match status" value="1"/>
</dbReference>
<dbReference type="Gene3D" id="3.60.110.10">
    <property type="entry name" value="Carbon-nitrogen hydrolase"/>
    <property type="match status" value="1"/>
</dbReference>
<dbReference type="HAMAP" id="MF_01243">
    <property type="entry name" value="Formamidase"/>
    <property type="match status" value="1"/>
</dbReference>
<dbReference type="InterPro" id="IPR050345">
    <property type="entry name" value="Aliph_Amidase/BUP"/>
</dbReference>
<dbReference type="InterPro" id="IPR003010">
    <property type="entry name" value="C-N_Hydrolase"/>
</dbReference>
<dbReference type="InterPro" id="IPR036526">
    <property type="entry name" value="C-N_Hydrolase_sf"/>
</dbReference>
<dbReference type="InterPro" id="IPR022843">
    <property type="entry name" value="Formamidase"/>
</dbReference>
<dbReference type="NCBIfam" id="NF009803">
    <property type="entry name" value="PRK13287.1"/>
    <property type="match status" value="1"/>
</dbReference>
<dbReference type="PANTHER" id="PTHR43674:SF15">
    <property type="entry name" value="FORMAMIDASE"/>
    <property type="match status" value="1"/>
</dbReference>
<dbReference type="PANTHER" id="PTHR43674">
    <property type="entry name" value="NITRILASE C965.09-RELATED"/>
    <property type="match status" value="1"/>
</dbReference>
<dbReference type="Pfam" id="PF00795">
    <property type="entry name" value="CN_hydrolase"/>
    <property type="match status" value="1"/>
</dbReference>
<dbReference type="SUPFAM" id="SSF56317">
    <property type="entry name" value="Carbon-nitrogen hydrolase"/>
    <property type="match status" value="1"/>
</dbReference>
<dbReference type="PROSITE" id="PS50263">
    <property type="entry name" value="CN_HYDROLASE"/>
    <property type="match status" value="1"/>
</dbReference>
<comment type="function">
    <text evidence="1">Is an aliphatic amidase with a restricted substrate specificity, as it only hydrolyzes formamide.</text>
</comment>
<comment type="catalytic activity">
    <reaction evidence="1">
        <text>formamide + H2O = formate + NH4(+)</text>
        <dbReference type="Rhea" id="RHEA:21948"/>
        <dbReference type="ChEBI" id="CHEBI:15377"/>
        <dbReference type="ChEBI" id="CHEBI:15740"/>
        <dbReference type="ChEBI" id="CHEBI:16397"/>
        <dbReference type="ChEBI" id="CHEBI:28938"/>
        <dbReference type="EC" id="3.5.1.49"/>
    </reaction>
</comment>
<comment type="similarity">
    <text evidence="1">Belongs to the carbon-nitrogen hydrolase superfamily. Aliphatic amidase family.</text>
</comment>
<keyword id="KW-0378">Hydrolase</keyword>
<organism>
    <name type="scientific">Bacillus thuringiensis (strain Al Hakam)</name>
    <dbReference type="NCBI Taxonomy" id="412694"/>
    <lineage>
        <taxon>Bacteria</taxon>
        <taxon>Bacillati</taxon>
        <taxon>Bacillota</taxon>
        <taxon>Bacilli</taxon>
        <taxon>Bacillales</taxon>
        <taxon>Bacillaceae</taxon>
        <taxon>Bacillus</taxon>
        <taxon>Bacillus cereus group</taxon>
    </lineage>
</organism>
<reference key="1">
    <citation type="journal article" date="2007" name="J. Bacteriol.">
        <title>The complete genome sequence of Bacillus thuringiensis Al Hakam.</title>
        <authorList>
            <person name="Challacombe J.F."/>
            <person name="Altherr M.R."/>
            <person name="Xie G."/>
            <person name="Bhotika S.S."/>
            <person name="Brown N."/>
            <person name="Bruce D."/>
            <person name="Campbell C.S."/>
            <person name="Campbell M.L."/>
            <person name="Chen J."/>
            <person name="Chertkov O."/>
            <person name="Cleland C."/>
            <person name="Dimitrijevic M."/>
            <person name="Doggett N.A."/>
            <person name="Fawcett J.J."/>
            <person name="Glavina T."/>
            <person name="Goodwin L.A."/>
            <person name="Green L.D."/>
            <person name="Han C.S."/>
            <person name="Hill K.K."/>
            <person name="Hitchcock P."/>
            <person name="Jackson P.J."/>
            <person name="Keim P."/>
            <person name="Kewalramani A.R."/>
            <person name="Longmire J."/>
            <person name="Lucas S."/>
            <person name="Malfatti S."/>
            <person name="Martinez D."/>
            <person name="McMurry K."/>
            <person name="Meincke L.J."/>
            <person name="Misra M."/>
            <person name="Moseman B.L."/>
            <person name="Mundt M."/>
            <person name="Munk A.C."/>
            <person name="Okinaka R.T."/>
            <person name="Parson-Quintana B."/>
            <person name="Reilly L.P."/>
            <person name="Richardson P."/>
            <person name="Robinson D.L."/>
            <person name="Saunders E."/>
            <person name="Tapia R."/>
            <person name="Tesmer J.G."/>
            <person name="Thayer N."/>
            <person name="Thompson L.S."/>
            <person name="Tice H."/>
            <person name="Ticknor L.O."/>
            <person name="Wills P.L."/>
            <person name="Gilna P."/>
            <person name="Brettin T.S."/>
        </authorList>
    </citation>
    <scope>NUCLEOTIDE SEQUENCE [LARGE SCALE GENOMIC DNA]</scope>
    <source>
        <strain>Al Hakam</strain>
    </source>
</reference>
<protein>
    <recommendedName>
        <fullName evidence="1">Formamidase</fullName>
        <ecNumber evidence="1">3.5.1.49</ecNumber>
    </recommendedName>
    <alternativeName>
        <fullName evidence="1">Formamide amidohydrolase</fullName>
    </alternativeName>
</protein>
<name>AMIF_BACAH</name>
<gene>
    <name evidence="1" type="primary">amiF</name>
    <name type="ordered locus">BALH_3568</name>
</gene>
<feature type="chain" id="PRO_1000067054" description="Formamidase">
    <location>
        <begin position="1"/>
        <end position="332"/>
    </location>
</feature>
<feature type="domain" description="CN hydrolase" evidence="2">
    <location>
        <begin position="14"/>
        <end position="259"/>
    </location>
</feature>
<feature type="active site" description="Proton acceptor" evidence="1">
    <location>
        <position position="60"/>
    </location>
</feature>
<feature type="active site" description="Proton donor" evidence="1">
    <location>
        <position position="132"/>
    </location>
</feature>
<feature type="active site" description="Nucleophile" evidence="1">
    <location>
        <position position="165"/>
    </location>
</feature>
<accession>A0RHV8</accession>
<sequence>MGSSGSMVKPISGFLTALIQYPVPVVESRADIDQQIKQIIKTIHSTKAGYPGLELIVFPEYSTQGLNTKKWTTEEFLCTVPGPETDLFAEACKESEVYGVFSIMERNPDGGEPYNTAIIIDPQGEMILKYRKLNPWVPVEPWKAGDLGLPVCDGPGGSKLAVCICHDGMFPEVAREAAYKGANVLIRISGYSTQVSEQWMLTNRSNAWQNLMYTLSVNLAGYDGVFYYFGEGQVCNFDGTTLVQGHRNPWEIVTAEVYPELADQARLGWGLENNIYNLGSRGYVATPGGVKENPYTFVKDLAEGKYKVPWEDEIKVKDGTIYGYPVKKTIHS</sequence>